<accession>P56485</accession>
<accession>Q91WI0</accession>
<reference key="1">
    <citation type="journal article" date="1998" name="Immunogenetics">
        <title>Cloning and chromosomal mapping of an orphan chemokine receptor: mouse RDC1.</title>
        <authorList>
            <person name="Heesen M."/>
            <person name="Berman M.A."/>
            <person name="Charest A."/>
            <person name="Housman D."/>
            <person name="Gerard C."/>
            <person name="Dorf M.E."/>
        </authorList>
    </citation>
    <scope>NUCLEOTIDE SEQUENCE [MRNA]</scope>
    <scope>TISSUE SPECIFICITY</scope>
    <source>
        <strain>129/SvJ</strain>
        <tissue>Peritoneal exudate</tissue>
    </source>
</reference>
<reference key="2">
    <citation type="journal article" date="2005" name="Science">
        <title>The transcriptional landscape of the mammalian genome.</title>
        <authorList>
            <person name="Carninci P."/>
            <person name="Kasukawa T."/>
            <person name="Katayama S."/>
            <person name="Gough J."/>
            <person name="Frith M.C."/>
            <person name="Maeda N."/>
            <person name="Oyama R."/>
            <person name="Ravasi T."/>
            <person name="Lenhard B."/>
            <person name="Wells C."/>
            <person name="Kodzius R."/>
            <person name="Shimokawa K."/>
            <person name="Bajic V.B."/>
            <person name="Brenner S.E."/>
            <person name="Batalov S."/>
            <person name="Forrest A.R."/>
            <person name="Zavolan M."/>
            <person name="Davis M.J."/>
            <person name="Wilming L.G."/>
            <person name="Aidinis V."/>
            <person name="Allen J.E."/>
            <person name="Ambesi-Impiombato A."/>
            <person name="Apweiler R."/>
            <person name="Aturaliya R.N."/>
            <person name="Bailey T.L."/>
            <person name="Bansal M."/>
            <person name="Baxter L."/>
            <person name="Beisel K.W."/>
            <person name="Bersano T."/>
            <person name="Bono H."/>
            <person name="Chalk A.M."/>
            <person name="Chiu K.P."/>
            <person name="Choudhary V."/>
            <person name="Christoffels A."/>
            <person name="Clutterbuck D.R."/>
            <person name="Crowe M.L."/>
            <person name="Dalla E."/>
            <person name="Dalrymple B.P."/>
            <person name="de Bono B."/>
            <person name="Della Gatta G."/>
            <person name="di Bernardo D."/>
            <person name="Down T."/>
            <person name="Engstrom P."/>
            <person name="Fagiolini M."/>
            <person name="Faulkner G."/>
            <person name="Fletcher C.F."/>
            <person name="Fukushima T."/>
            <person name="Furuno M."/>
            <person name="Futaki S."/>
            <person name="Gariboldi M."/>
            <person name="Georgii-Hemming P."/>
            <person name="Gingeras T.R."/>
            <person name="Gojobori T."/>
            <person name="Green R.E."/>
            <person name="Gustincich S."/>
            <person name="Harbers M."/>
            <person name="Hayashi Y."/>
            <person name="Hensch T.K."/>
            <person name="Hirokawa N."/>
            <person name="Hill D."/>
            <person name="Huminiecki L."/>
            <person name="Iacono M."/>
            <person name="Ikeo K."/>
            <person name="Iwama A."/>
            <person name="Ishikawa T."/>
            <person name="Jakt M."/>
            <person name="Kanapin A."/>
            <person name="Katoh M."/>
            <person name="Kawasawa Y."/>
            <person name="Kelso J."/>
            <person name="Kitamura H."/>
            <person name="Kitano H."/>
            <person name="Kollias G."/>
            <person name="Krishnan S.P."/>
            <person name="Kruger A."/>
            <person name="Kummerfeld S.K."/>
            <person name="Kurochkin I.V."/>
            <person name="Lareau L.F."/>
            <person name="Lazarevic D."/>
            <person name="Lipovich L."/>
            <person name="Liu J."/>
            <person name="Liuni S."/>
            <person name="McWilliam S."/>
            <person name="Madan Babu M."/>
            <person name="Madera M."/>
            <person name="Marchionni L."/>
            <person name="Matsuda H."/>
            <person name="Matsuzawa S."/>
            <person name="Miki H."/>
            <person name="Mignone F."/>
            <person name="Miyake S."/>
            <person name="Morris K."/>
            <person name="Mottagui-Tabar S."/>
            <person name="Mulder N."/>
            <person name="Nakano N."/>
            <person name="Nakauchi H."/>
            <person name="Ng P."/>
            <person name="Nilsson R."/>
            <person name="Nishiguchi S."/>
            <person name="Nishikawa S."/>
            <person name="Nori F."/>
            <person name="Ohara O."/>
            <person name="Okazaki Y."/>
            <person name="Orlando V."/>
            <person name="Pang K.C."/>
            <person name="Pavan W.J."/>
            <person name="Pavesi G."/>
            <person name="Pesole G."/>
            <person name="Petrovsky N."/>
            <person name="Piazza S."/>
            <person name="Reed J."/>
            <person name="Reid J.F."/>
            <person name="Ring B.Z."/>
            <person name="Ringwald M."/>
            <person name="Rost B."/>
            <person name="Ruan Y."/>
            <person name="Salzberg S.L."/>
            <person name="Sandelin A."/>
            <person name="Schneider C."/>
            <person name="Schoenbach C."/>
            <person name="Sekiguchi K."/>
            <person name="Semple C.A."/>
            <person name="Seno S."/>
            <person name="Sessa L."/>
            <person name="Sheng Y."/>
            <person name="Shibata Y."/>
            <person name="Shimada H."/>
            <person name="Shimada K."/>
            <person name="Silva D."/>
            <person name="Sinclair B."/>
            <person name="Sperling S."/>
            <person name="Stupka E."/>
            <person name="Sugiura K."/>
            <person name="Sultana R."/>
            <person name="Takenaka Y."/>
            <person name="Taki K."/>
            <person name="Tammoja K."/>
            <person name="Tan S.L."/>
            <person name="Tang S."/>
            <person name="Taylor M.S."/>
            <person name="Tegner J."/>
            <person name="Teichmann S.A."/>
            <person name="Ueda H.R."/>
            <person name="van Nimwegen E."/>
            <person name="Verardo R."/>
            <person name="Wei C.L."/>
            <person name="Yagi K."/>
            <person name="Yamanishi H."/>
            <person name="Zabarovsky E."/>
            <person name="Zhu S."/>
            <person name="Zimmer A."/>
            <person name="Hide W."/>
            <person name="Bult C."/>
            <person name="Grimmond S.M."/>
            <person name="Teasdale R.D."/>
            <person name="Liu E.T."/>
            <person name="Brusic V."/>
            <person name="Quackenbush J."/>
            <person name="Wahlestedt C."/>
            <person name="Mattick J.S."/>
            <person name="Hume D.A."/>
            <person name="Kai C."/>
            <person name="Sasaki D."/>
            <person name="Tomaru Y."/>
            <person name="Fukuda S."/>
            <person name="Kanamori-Katayama M."/>
            <person name="Suzuki M."/>
            <person name="Aoki J."/>
            <person name="Arakawa T."/>
            <person name="Iida J."/>
            <person name="Imamura K."/>
            <person name="Itoh M."/>
            <person name="Kato T."/>
            <person name="Kawaji H."/>
            <person name="Kawagashira N."/>
            <person name="Kawashima T."/>
            <person name="Kojima M."/>
            <person name="Kondo S."/>
            <person name="Konno H."/>
            <person name="Nakano K."/>
            <person name="Ninomiya N."/>
            <person name="Nishio T."/>
            <person name="Okada M."/>
            <person name="Plessy C."/>
            <person name="Shibata K."/>
            <person name="Shiraki T."/>
            <person name="Suzuki S."/>
            <person name="Tagami M."/>
            <person name="Waki K."/>
            <person name="Watahiki A."/>
            <person name="Okamura-Oho Y."/>
            <person name="Suzuki H."/>
            <person name="Kawai J."/>
            <person name="Hayashizaki Y."/>
        </authorList>
    </citation>
    <scope>NUCLEOTIDE SEQUENCE [LARGE SCALE MRNA]</scope>
    <source>
        <strain>C57BL/6J</strain>
        <tissue>Forelimb</tissue>
    </source>
</reference>
<reference key="3">
    <citation type="journal article" date="2004" name="Genome Res.">
        <title>The status, quality, and expansion of the NIH full-length cDNA project: the Mammalian Gene Collection (MGC).</title>
        <authorList>
            <consortium name="The MGC Project Team"/>
        </authorList>
    </citation>
    <scope>NUCLEOTIDE SEQUENCE [LARGE SCALE MRNA]</scope>
    <source>
        <tissue>Kidney</tissue>
    </source>
</reference>
<reference key="4">
    <citation type="journal article" date="2006" name="J. Exp. Med.">
        <title>A novel chemokine receptor for SDF-1 and I-TAC involved in cell survival, cell adhesion, and tumor development.</title>
        <authorList>
            <person name="Burns J.M."/>
            <person name="Summers B.C."/>
            <person name="Wang Y."/>
            <person name="Melikian A."/>
            <person name="Berahovich R."/>
            <person name="Miao Z."/>
            <person name="Penfold M.E."/>
            <person name="Sunshine M.J."/>
            <person name="Littman D.R."/>
            <person name="Kuo C.J."/>
            <person name="Wei K."/>
            <person name="McMaster B.E."/>
            <person name="Wright K."/>
            <person name="Howard M.C."/>
            <person name="Schall T.J."/>
        </authorList>
    </citation>
    <scope>TISSUE SPECIFICITY</scope>
    <scope>DEVELOPMENTAL STAGE</scope>
</reference>
<reference key="5">
    <citation type="journal article" date="2007" name="Proc. Natl. Acad. Sci. U.S.A.">
        <title>Disrupted cardiac development but normal hematopoiesis in mice deficient in the second CXCL12/SDF-1 receptor, CXCR7.</title>
        <authorList>
            <person name="Sierro F."/>
            <person name="Biben C."/>
            <person name="Martinez-Munoz L."/>
            <person name="Mellado M."/>
            <person name="Ransohoff R.M."/>
            <person name="Li M."/>
            <person name="Woehl B."/>
            <person name="Leung H."/>
            <person name="Groom J."/>
            <person name="Batten M."/>
            <person name="Harvey R.P."/>
            <person name="Martinez-A C."/>
            <person name="Mackay C.R."/>
            <person name="Mackay F."/>
        </authorList>
    </citation>
    <scope>FUNCTION</scope>
    <scope>TISSUE SPECIFICITY</scope>
    <scope>DEVELOPMENTAL STAGE</scope>
    <scope>DISRUPTION PHENOTYPE</scope>
</reference>
<reference key="6">
    <citation type="journal article" date="2008" name="Genesis">
        <title>Early postnatal lethality and cardiovascular defects in CXCR7-deficient mice.</title>
        <authorList>
            <person name="Gerrits H."/>
            <person name="van Ingen Schenau D.S."/>
            <person name="Bakker N.E."/>
            <person name="van Disseldorp A.J."/>
            <person name="Strik A."/>
            <person name="Hermens L.S."/>
            <person name="Koenen T.B."/>
            <person name="Krajnc-Franken M.A."/>
            <person name="Gossen J.A."/>
        </authorList>
    </citation>
    <scope>FUNCTION</scope>
    <scope>DISRUPTION PHENOTYPE</scope>
</reference>
<reference key="7">
    <citation type="journal article" date="2010" name="Cell">
        <title>A tissue-specific atlas of mouse protein phosphorylation and expression.</title>
        <authorList>
            <person name="Huttlin E.L."/>
            <person name="Jedrychowski M.P."/>
            <person name="Elias J.E."/>
            <person name="Goswami T."/>
            <person name="Rad R."/>
            <person name="Beausoleil S.A."/>
            <person name="Villen J."/>
            <person name="Haas W."/>
            <person name="Sowa M.E."/>
            <person name="Gygi S.P."/>
        </authorList>
    </citation>
    <scope>PHOSPHORYLATION [LARGE SCALE ANALYSIS] AT SER-347; SER-350 AND SER-355</scope>
    <scope>IDENTIFICATION BY MASS SPECTROMETRY [LARGE SCALE ANALYSIS]</scope>
    <source>
        <tissue>Brain</tissue>
        <tissue>Brown adipose tissue</tissue>
        <tissue>Heart</tissue>
        <tissue>Kidney</tissue>
        <tissue>Lung</tissue>
        <tissue>Spleen</tissue>
    </source>
</reference>
<reference key="8">
    <citation type="journal article" date="2010" name="J. Neuroimmunol.">
        <title>Expression and function of CXCR7 in the mouse forebrain.</title>
        <authorList>
            <person name="Tiveron M.C."/>
            <person name="Boutin C."/>
            <person name="Daou P."/>
            <person name="Moepps B."/>
            <person name="Cremer H."/>
        </authorList>
    </citation>
    <scope>DEVELOPMENTAL STAGE</scope>
</reference>
<reference key="9">
    <citation type="journal article" date="2010" name="PLoS ONE">
        <title>CXCR7 functions as a scavenger for CXCL12 and CXCL11.</title>
        <authorList>
            <person name="Naumann U."/>
            <person name="Cameroni E."/>
            <person name="Pruenster M."/>
            <person name="Mahabaleshwar H."/>
            <person name="Raz E."/>
            <person name="Zerwes H.G."/>
            <person name="Rot A."/>
            <person name="Thelen M."/>
        </authorList>
    </citation>
    <scope>FUNCTION</scope>
</reference>
<reference key="10">
    <citation type="journal article" date="2011" name="Dev. Dyn.">
        <title>The chemokine receptor CXCR7 functions to regulate cardiac valve remodeling.</title>
        <authorList>
            <person name="Yu S."/>
            <person name="Crawford D."/>
            <person name="Tsuchihashi T."/>
            <person name="Behrens T.W."/>
            <person name="Srivastava D."/>
        </authorList>
    </citation>
    <scope>FUNCTION</scope>
    <scope>DEVELOPMENTAL STAGE</scope>
    <scope>DISRUPTION PHENOTYPE</scope>
</reference>
<reference key="11">
    <citation type="journal article" date="2011" name="Neuron">
        <title>Cxcr7 controls neuronal migration by regulating chemokine responsiveness.</title>
        <authorList>
            <person name="Sanchez-Alcaniz J.A."/>
            <person name="Haege S."/>
            <person name="Mueller W."/>
            <person name="Pla R."/>
            <person name="Mackay F."/>
            <person name="Schulz S."/>
            <person name="Lopez-Bendito G."/>
            <person name="Stumm R."/>
            <person name="Marin O."/>
        </authorList>
    </citation>
    <scope>FUNCTION</scope>
    <scope>SUBCELLULAR LOCATION</scope>
    <scope>DEVELOPMENTAL STAGE</scope>
    <scope>DISRUPTION PHENOTYPE</scope>
</reference>
<reference key="12">
    <citation type="journal article" date="2019" name="Hum. Mol. Genet.">
        <title>Decreased ACKR3 (CXCR7) function causes oculomotor synkinesis in mice and humans.</title>
        <authorList>
            <person name="Whitman M.C."/>
            <person name="Miyake N."/>
            <person name="Nguyen E.H."/>
            <person name="Bell J.L."/>
            <person name="Matos Ruiz P.M."/>
            <person name="Chan W.M."/>
            <person name="Di Gioia S.A."/>
            <person name="Mukherjee N."/>
            <person name="Barry B.J."/>
            <person name="Bosley T.M."/>
            <person name="Khan A.O."/>
            <person name="Engle E.C."/>
        </authorList>
    </citation>
    <scope>FUNCTION</scope>
    <scope>DISRUPTION PHENOTYPE</scope>
    <scope>DEVELOPMENTAL STAGE</scope>
</reference>
<name>ACKR3_MOUSE</name>
<comment type="function">
    <text evidence="6 7 8 10 11 12">Atypical chemokine receptor that controls chemokine levels and localization via high-affinity chemokine binding that is uncoupled from classic ligand-driven signal transduction cascades, resulting instead in chemokine sequestration, degradation, or transcytosis. Also known as interceptor (internalizing receptor) or chemokine-scavenging receptor or chemokine decoy receptor. Acts as a receptor for chemokines CXCL11 and CXCL12/SDF1. Chemokine binding does not activate G-protein-mediated signal transduction but instead induces beta-arrestin recruitment, leading to ligand internalization and activation of MAPK signaling pathway. Required for regulation of CXCR4 protein levels in migrating interneurons, thereby adapting their chemokine responsiveness. In glioma cells, transduces signals via MEK/ERK pathway, mediating resistance to apoptosis. Promotes cell growth and survival. Not involved in cell migration, adhesion or proliferation of normal hematopoietic progenitors but activated by CXCL11 in malignant hemapoietic cells, leading to phosphorylation of ERK1/2 (MAPK3/MAPK1) and enhanced cell adhesion and migration. Plays a regulatory role in CXCR4-mediated activation of cell surface integrins by CXCL12. Required for heart valve development. Regulates axon guidance in the oculomotor system through the regulation of CXCL12 levels (PubMed:31211835).</text>
</comment>
<comment type="subunit">
    <text evidence="2">Homodimer. Can form heterodimers with CXCR4; heterodimerization may regulate CXCR4 signaling activity. Interacts with ARRB1 and ARRB2.</text>
</comment>
<comment type="subcellular location">
    <subcellularLocation>
        <location evidence="10">Cell membrane</location>
        <topology evidence="10">Multi-pass membrane protein</topology>
    </subcellularLocation>
    <subcellularLocation>
        <location evidence="2">Early endosome</location>
    </subcellularLocation>
    <subcellularLocation>
        <location evidence="10">Recycling endosome</location>
    </subcellularLocation>
    <text evidence="2">Predominantly localizes to endocytic vesicles, and upon stimulation by the ligand is internalized via clathrin-coated pits in a beta-arrestin-dependent manner. Once internalized, the ligand dissociates from the receptor, and is targeted to degradation while the receptor is recycled back to the cell membrane.</text>
</comment>
<comment type="tissue specificity">
    <text evidence="5 6 13">Not detected in blood, liver, lung and heart, but high expression detected in several tumor cell lines (at protein level). Expressed in heart, spleen, kidney, lung, ovary, brain, testis, astrocytes, neutrophils and B-lymphocytes.</text>
</comment>
<comment type="developmental stage">
    <text evidence="5 6 9 10 11 12">Expression detected after 9.5 dpc in the endothelial layer of the forming heart, neural tube, brain and septum transversum. At 10.5 dpc, expressed at high levels in the prosencephalon and in a part of the rhombencephalon and at lower levels in the neural tube, somites and heart. Detected in liver at 11 dpc and 13 dpc, but not at 15 dpc and 17 dpc. During heart development, expression detected mainly in endocardial cells and endocardial cushion mesenchymal cells in both outflow tract and atrioventricular canal regions and to a lesser degree in myocardial cells at 10.5 dpc, in the mesenchyme of the forming valves and in numerous microvessels in the myocardium at 12.5 dpc, and from 14.5 dpc onward mainly in the microvasculature associated with myocardium, valves and great vessels. In developing telencephalon, observed at 11.5 dpc in the ventral telencephalon in proliferative zones of the medial ganglionic eminence (MGE), in ventral part of the lateral ganglionic eminence (LGE) and in Cajal-Retzius (CR) neurons of dorsal telencephalon. At 12.5 dpc, detected in migrating olfactory tubercle neuron precursors and cortical interneurons, and in CR cells and subplate neurons of the cortex. At 13.5 dpc, observed in the germinal zone of MGE in the subpallium, in the marginal zone and cortical subventricular zone (SVZ) of the lateral cortex as well as in pyramidal cells and tangentially migrating interneurons. At postnatal stages, expressed in postnatal cortical plate and in migrating olfactory bulb interneurons in the striatal SVZ and rostral migratory stream. Expressed in the developing neuroepithelium in the region of the developing oculomotor nucleus at 11.5 dpc and 13.5 dpc (PubMed:31211835).</text>
</comment>
<comment type="domain">
    <text evidence="2">The C-terminal cytoplasmic tail, plays a key role in: correct trafficking to the cell membrane, recruitment of beta-arrestin, ubiquitination, and in chemokine scavenging and signaling functions. The Ser/Thr residues and the Lys residues in the C-terminal cytoplasmic tail are essential for beta-arrestin recruitment and ubiquitination respectively.</text>
</comment>
<comment type="PTM">
    <text evidence="2">The Ser/Thr residues in the C-terminal cytoplasmic tail may be phosphorylated.</text>
</comment>
<comment type="PTM">
    <text evidence="2">Ubiquitinated at the Lys residues in its C-terminal cytoplasmic tail and is essential for correct trafficking from and to the cell membrane. Deubiquitinated by CXCL12-stimulation in a reversible manner.</text>
</comment>
<comment type="disruption phenotype">
    <text evidence="6 7 10 11 12">Lethal at perinatal stages, with most of the neonates dying within 24 hours. Mutants display slightly enlarged heart, but no clear effect on heart functionality is observed. Mutant mice display abnormalities in semilunar valves and ventricles, myocardial degeneration and fibrosis, as well as abnormal intracortical migration of interneurons and premature invasion of the cortical plate. According to PubMed:17804806, mutants display ventricular septal and atrial septal defects. According to PubMed:21246655, mutants display ventricular septal defects but no atrial septal defects. According to PubMed:18442043, no abnormalities in semilunar valve formation or ventricular septal defects are observed. No effect on hematopoiesis, neural development and gastrointestinal vascularization is observed. No apparent bone phenotype is observed. Mutant embryos show oculomotor nerve misrouting, ranging from complete misprojection in the midbrain, to aberrant peripheral branching, to a thin nerve, which aberrantly innervates the lateral rectus (PubMed:31211835).</text>
</comment>
<comment type="similarity">
    <text evidence="4">Belongs to the G-protein coupled receptor 1 family. Atypical chemokine receptor subfamily.</text>
</comment>
<organism>
    <name type="scientific">Mus musculus</name>
    <name type="common">Mouse</name>
    <dbReference type="NCBI Taxonomy" id="10090"/>
    <lineage>
        <taxon>Eukaryota</taxon>
        <taxon>Metazoa</taxon>
        <taxon>Chordata</taxon>
        <taxon>Craniata</taxon>
        <taxon>Vertebrata</taxon>
        <taxon>Euteleostomi</taxon>
        <taxon>Mammalia</taxon>
        <taxon>Eutheria</taxon>
        <taxon>Euarchontoglires</taxon>
        <taxon>Glires</taxon>
        <taxon>Rodentia</taxon>
        <taxon>Myomorpha</taxon>
        <taxon>Muroidea</taxon>
        <taxon>Muridae</taxon>
        <taxon>Murinae</taxon>
        <taxon>Mus</taxon>
        <taxon>Mus</taxon>
    </lineage>
</organism>
<evidence type="ECO:0000250" key="1"/>
<evidence type="ECO:0000250" key="2">
    <source>
        <dbReference type="UniProtKB" id="P25106"/>
    </source>
</evidence>
<evidence type="ECO:0000255" key="3"/>
<evidence type="ECO:0000255" key="4">
    <source>
        <dbReference type="PROSITE-ProRule" id="PRU00521"/>
    </source>
</evidence>
<evidence type="ECO:0000269" key="5">
    <source>
    </source>
</evidence>
<evidence type="ECO:0000269" key="6">
    <source>
    </source>
</evidence>
<evidence type="ECO:0000269" key="7">
    <source>
    </source>
</evidence>
<evidence type="ECO:0000269" key="8">
    <source>
    </source>
</evidence>
<evidence type="ECO:0000269" key="9">
    <source>
    </source>
</evidence>
<evidence type="ECO:0000269" key="10">
    <source>
    </source>
</evidence>
<evidence type="ECO:0000269" key="11">
    <source>
    </source>
</evidence>
<evidence type="ECO:0000269" key="12">
    <source>
    </source>
</evidence>
<evidence type="ECO:0000269" key="13">
    <source>
    </source>
</evidence>
<evidence type="ECO:0000305" key="14"/>
<evidence type="ECO:0000312" key="15">
    <source>
        <dbReference type="MGI" id="MGI:109562"/>
    </source>
</evidence>
<evidence type="ECO:0007744" key="16">
    <source>
    </source>
</evidence>
<sequence>MDVHLFDYAEPGNYSDINWPCNSSDCIVVDTVQCPTMPNKNVLLYTLSFIYIFIFVIGMIANSVVVWVNIQAKTTGYDTHCYILNLAIADLWVVITIPVWVVSLVQHNQWPMGELTCKITHLIFSINLFGSIFFLACMSVDRYLSITYFTGTSSYKKKMVRRVVCILVWLLAFFVSLPDTYYLKTVTSASNNETYCRSFYPEHSIKEWLIGMELVSVILGFAVPFTIIAIFYFLLARAMSASGDQEKHSSRKIIFSYVVVFLVCWLPYHFVVLLDIFSILHYIPFTCQLENVLFTALHVTQCLSLVHCCVNPVLYSFINRNYRYELMKAFIFKYSAKTGLTKLIDASRVSETEYSALEQNTK</sequence>
<feature type="chain" id="PRO_0000070102" description="Atypical chemokine receptor 3">
    <location>
        <begin position="1"/>
        <end position="362"/>
    </location>
</feature>
<feature type="topological domain" description="Extracellular" evidence="3">
    <location>
        <begin position="1"/>
        <end position="47"/>
    </location>
</feature>
<feature type="transmembrane region" description="Helical; Name=1" evidence="3">
    <location>
        <begin position="48"/>
        <end position="68"/>
    </location>
</feature>
<feature type="topological domain" description="Cytoplasmic" evidence="3">
    <location>
        <begin position="69"/>
        <end position="81"/>
    </location>
</feature>
<feature type="transmembrane region" description="Helical; Name=2" evidence="3">
    <location>
        <begin position="82"/>
        <end position="102"/>
    </location>
</feature>
<feature type="topological domain" description="Extracellular" evidence="3">
    <location>
        <begin position="103"/>
        <end position="118"/>
    </location>
</feature>
<feature type="transmembrane region" description="Helical; Name=3" evidence="3">
    <location>
        <begin position="119"/>
        <end position="139"/>
    </location>
</feature>
<feature type="topological domain" description="Cytoplasmic" evidence="3">
    <location>
        <begin position="140"/>
        <end position="162"/>
    </location>
</feature>
<feature type="transmembrane region" description="Helical; Name=4" evidence="3">
    <location>
        <begin position="163"/>
        <end position="183"/>
    </location>
</feature>
<feature type="topological domain" description="Extracellular" evidence="3">
    <location>
        <begin position="184"/>
        <end position="213"/>
    </location>
</feature>
<feature type="transmembrane region" description="Helical; Name=5" evidence="3">
    <location>
        <begin position="214"/>
        <end position="234"/>
    </location>
</feature>
<feature type="topological domain" description="Cytoplasmic" evidence="3">
    <location>
        <begin position="235"/>
        <end position="252"/>
    </location>
</feature>
<feature type="transmembrane region" description="Helical; Name=6" evidence="3">
    <location>
        <begin position="253"/>
        <end position="273"/>
    </location>
</feature>
<feature type="topological domain" description="Extracellular" evidence="3">
    <location>
        <begin position="274"/>
        <end position="296"/>
    </location>
</feature>
<feature type="transmembrane region" description="Helical; Name=7" evidence="3">
    <location>
        <begin position="297"/>
        <end position="319"/>
    </location>
</feature>
<feature type="topological domain" description="Cytoplasmic" evidence="3">
    <location>
        <begin position="320"/>
        <end position="362"/>
    </location>
</feature>
<feature type="region of interest" description="C-terminal cytoplasmic tail" evidence="1">
    <location>
        <begin position="324"/>
        <end position="362"/>
    </location>
</feature>
<feature type="modified residue" description="Phosphoserine" evidence="16">
    <location>
        <position position="347"/>
    </location>
</feature>
<feature type="modified residue" description="Phosphoserine" evidence="16">
    <location>
        <position position="350"/>
    </location>
</feature>
<feature type="modified residue" description="Phosphoserine" evidence="16">
    <location>
        <position position="355"/>
    </location>
</feature>
<feature type="glycosylation site" description="N-linked (GlcNAc...) asparagine" evidence="3">
    <location>
        <position position="13"/>
    </location>
</feature>
<feature type="glycosylation site" description="N-linked (GlcNAc...) asparagine" evidence="3">
    <location>
        <position position="22"/>
    </location>
</feature>
<feature type="disulfide bond" evidence="4">
    <location>
        <begin position="117"/>
        <end position="196"/>
    </location>
</feature>
<feature type="sequence conflict" description="In Ref. 1; AAB71343." evidence="14" ref="1">
    <original>I</original>
    <variation>T</variation>
    <location>
        <position position="97"/>
    </location>
</feature>
<feature type="sequence conflict" description="In Ref. 1; AAB71343." evidence="14" ref="1">
    <original>T</original>
    <variation>A</variation>
    <location>
        <position position="185"/>
    </location>
</feature>
<protein>
    <recommendedName>
        <fullName evidence="14">Atypical chemokine receptor 3</fullName>
    </recommendedName>
    <alternativeName>
        <fullName>C-X-C chemokine receptor type 7</fullName>
        <shortName>CXC-R7</shortName>
        <shortName>CXCR-7</shortName>
    </alternativeName>
    <alternativeName>
        <fullName>Chemokine orphan receptor 1</fullName>
    </alternativeName>
    <alternativeName>
        <fullName>G-protein coupled receptor RDC1 homolog</fullName>
        <shortName>RDC-1</shortName>
    </alternativeName>
</protein>
<gene>
    <name evidence="15" type="primary">Ackr3</name>
    <name type="synonym">Cmkor1</name>
    <name type="synonym">Cxcr7</name>
    <name type="synonym">Rdc1</name>
</gene>
<keyword id="KW-0130">Cell adhesion</keyword>
<keyword id="KW-1003">Cell membrane</keyword>
<keyword id="KW-0217">Developmental protein</keyword>
<keyword id="KW-1015">Disulfide bond</keyword>
<keyword id="KW-0967">Endosome</keyword>
<keyword id="KW-0297">G-protein coupled receptor</keyword>
<keyword id="KW-0325">Glycoprotein</keyword>
<keyword id="KW-0472">Membrane</keyword>
<keyword id="KW-0597">Phosphoprotein</keyword>
<keyword id="KW-0675">Receptor</keyword>
<keyword id="KW-1185">Reference proteome</keyword>
<keyword id="KW-0807">Transducer</keyword>
<keyword id="KW-0812">Transmembrane</keyword>
<keyword id="KW-1133">Transmembrane helix</keyword>
<keyword id="KW-0832">Ubl conjugation</keyword>
<proteinExistence type="evidence at protein level"/>
<dbReference type="EMBL" id="AF000236">
    <property type="protein sequence ID" value="AAB71343.1"/>
    <property type="molecule type" value="mRNA"/>
</dbReference>
<dbReference type="EMBL" id="AK031100">
    <property type="protein sequence ID" value="BAC27252.1"/>
    <property type="molecule type" value="mRNA"/>
</dbReference>
<dbReference type="EMBL" id="BC015254">
    <property type="protein sequence ID" value="AAH15254.1"/>
    <property type="molecule type" value="mRNA"/>
</dbReference>
<dbReference type="CCDS" id="CCDS15152.1"/>
<dbReference type="RefSeq" id="NP_001258536.1">
    <property type="nucleotide sequence ID" value="NM_001271607.1"/>
</dbReference>
<dbReference type="RefSeq" id="NP_031748.2">
    <property type="nucleotide sequence ID" value="NM_007722.4"/>
</dbReference>
<dbReference type="RefSeq" id="XP_036012962.1">
    <property type="nucleotide sequence ID" value="XM_036157069.1"/>
</dbReference>
<dbReference type="SMR" id="P56485"/>
<dbReference type="FunCoup" id="P56485">
    <property type="interactions" value="1051"/>
</dbReference>
<dbReference type="IntAct" id="P56485">
    <property type="interactions" value="1"/>
</dbReference>
<dbReference type="STRING" id="10090.ENSMUSP00000069114"/>
<dbReference type="BindingDB" id="P56485"/>
<dbReference type="ChEMBL" id="CHEMBL4105796"/>
<dbReference type="GlyCosmos" id="P56485">
    <property type="glycosylation" value="2 sites, No reported glycans"/>
</dbReference>
<dbReference type="GlyGen" id="P56485">
    <property type="glycosylation" value="3 sites, 1 N-linked glycan (1 site)"/>
</dbReference>
<dbReference type="iPTMnet" id="P56485"/>
<dbReference type="PhosphoSitePlus" id="P56485"/>
<dbReference type="jPOST" id="P56485"/>
<dbReference type="PaxDb" id="10090-ENSMUSP00000069114"/>
<dbReference type="ProteomicsDB" id="285935"/>
<dbReference type="ABCD" id="P56485">
    <property type="antibodies" value="1 sequenced antibody"/>
</dbReference>
<dbReference type="Antibodypedia" id="47699">
    <property type="antibodies" value="873 antibodies from 40 providers"/>
</dbReference>
<dbReference type="DNASU" id="12778"/>
<dbReference type="Ensembl" id="ENSMUST00000065587.5">
    <property type="protein sequence ID" value="ENSMUSP00000069114.5"/>
    <property type="gene ID" value="ENSMUSG00000044337.6"/>
</dbReference>
<dbReference type="GeneID" id="12778"/>
<dbReference type="KEGG" id="mmu:12778"/>
<dbReference type="UCSC" id="uc007bzh.2">
    <property type="organism name" value="mouse"/>
</dbReference>
<dbReference type="AGR" id="MGI:109562"/>
<dbReference type="CTD" id="57007"/>
<dbReference type="MGI" id="MGI:109562">
    <property type="gene designation" value="Ackr3"/>
</dbReference>
<dbReference type="VEuPathDB" id="HostDB:ENSMUSG00000044337"/>
<dbReference type="eggNOG" id="KOG3656">
    <property type="taxonomic scope" value="Eukaryota"/>
</dbReference>
<dbReference type="GeneTree" id="ENSGT01110000267168"/>
<dbReference type="HOGENOM" id="CLU_009579_8_3_1"/>
<dbReference type="InParanoid" id="P56485"/>
<dbReference type="OMA" id="CRPVYPP"/>
<dbReference type="OrthoDB" id="5963140at2759"/>
<dbReference type="PhylomeDB" id="P56485"/>
<dbReference type="TreeFam" id="TF333489"/>
<dbReference type="Reactome" id="R-MMU-380108">
    <property type="pathway name" value="Chemokine receptors bind chemokines"/>
</dbReference>
<dbReference type="Reactome" id="R-MMU-418594">
    <property type="pathway name" value="G alpha (i) signalling events"/>
</dbReference>
<dbReference type="BioGRID-ORCS" id="12778">
    <property type="hits" value="1 hit in 78 CRISPR screens"/>
</dbReference>
<dbReference type="ChiTaRS" id="Ackr3">
    <property type="organism name" value="mouse"/>
</dbReference>
<dbReference type="PRO" id="PR:P56485"/>
<dbReference type="Proteomes" id="UP000000589">
    <property type="component" value="Chromosome 1"/>
</dbReference>
<dbReference type="RNAct" id="P56485">
    <property type="molecule type" value="protein"/>
</dbReference>
<dbReference type="Bgee" id="ENSMUSG00000044337">
    <property type="expression patterns" value="Expressed in metanephric cortical collecting duct and 267 other cell types or tissues"/>
</dbReference>
<dbReference type="GO" id="GO:0009986">
    <property type="term" value="C:cell surface"/>
    <property type="evidence" value="ECO:0000250"/>
    <property type="project" value="UniProtKB"/>
</dbReference>
<dbReference type="GO" id="GO:0005905">
    <property type="term" value="C:clathrin-coated pit"/>
    <property type="evidence" value="ECO:0000250"/>
    <property type="project" value="UniProtKB"/>
</dbReference>
<dbReference type="GO" id="GO:0005769">
    <property type="term" value="C:early endosome"/>
    <property type="evidence" value="ECO:0007669"/>
    <property type="project" value="UniProtKB-SubCell"/>
</dbReference>
<dbReference type="GO" id="GO:0005768">
    <property type="term" value="C:endosome"/>
    <property type="evidence" value="ECO:0000250"/>
    <property type="project" value="UniProtKB"/>
</dbReference>
<dbReference type="GO" id="GO:0005886">
    <property type="term" value="C:plasma membrane"/>
    <property type="evidence" value="ECO:0000250"/>
    <property type="project" value="UniProtKB"/>
</dbReference>
<dbReference type="GO" id="GO:0055037">
    <property type="term" value="C:recycling endosome"/>
    <property type="evidence" value="ECO:0007669"/>
    <property type="project" value="UniProtKB-SubCell"/>
</dbReference>
<dbReference type="GO" id="GO:0019958">
    <property type="term" value="F:C-X-C chemokine binding"/>
    <property type="evidence" value="ECO:0000250"/>
    <property type="project" value="UniProtKB"/>
</dbReference>
<dbReference type="GO" id="GO:0016494">
    <property type="term" value="F:C-X-C chemokine receptor activity"/>
    <property type="evidence" value="ECO:0007669"/>
    <property type="project" value="Ensembl"/>
</dbReference>
<dbReference type="GO" id="GO:0015026">
    <property type="term" value="F:coreceptor activity"/>
    <property type="evidence" value="ECO:0007669"/>
    <property type="project" value="InterPro"/>
</dbReference>
<dbReference type="GO" id="GO:0005044">
    <property type="term" value="F:scavenger receptor activity"/>
    <property type="evidence" value="ECO:0000250"/>
    <property type="project" value="UniProtKB"/>
</dbReference>
<dbReference type="GO" id="GO:0001525">
    <property type="term" value="P:angiogenesis"/>
    <property type="evidence" value="ECO:0007669"/>
    <property type="project" value="InterPro"/>
</dbReference>
<dbReference type="GO" id="GO:0007155">
    <property type="term" value="P:cell adhesion"/>
    <property type="evidence" value="ECO:0007669"/>
    <property type="project" value="UniProtKB-KW"/>
</dbReference>
<dbReference type="GO" id="GO:0006935">
    <property type="term" value="P:chemotaxis"/>
    <property type="evidence" value="ECO:0007669"/>
    <property type="project" value="InterPro"/>
</dbReference>
<dbReference type="GO" id="GO:0008285">
    <property type="term" value="P:negative regulation of cell population proliferation"/>
    <property type="evidence" value="ECO:0000316"/>
    <property type="project" value="MGI"/>
</dbReference>
<dbReference type="GO" id="GO:1902230">
    <property type="term" value="P:negative regulation of intrinsic apoptotic signaling pathway in response to DNA damage"/>
    <property type="evidence" value="ECO:0007669"/>
    <property type="project" value="Ensembl"/>
</dbReference>
<dbReference type="GO" id="GO:0021557">
    <property type="term" value="P:oculomotor nerve development"/>
    <property type="evidence" value="ECO:0000315"/>
    <property type="project" value="UniProtKB"/>
</dbReference>
<dbReference type="GO" id="GO:0070374">
    <property type="term" value="P:positive regulation of ERK1 and ERK2 cascade"/>
    <property type="evidence" value="ECO:0000316"/>
    <property type="project" value="MGI"/>
</dbReference>
<dbReference type="GO" id="GO:1905322">
    <property type="term" value="P:positive regulation of mesenchymal stem cell migration"/>
    <property type="evidence" value="ECO:0007669"/>
    <property type="project" value="Ensembl"/>
</dbReference>
<dbReference type="GO" id="GO:0031623">
    <property type="term" value="P:receptor internalization"/>
    <property type="evidence" value="ECO:0000250"/>
    <property type="project" value="UniProtKB"/>
</dbReference>
<dbReference type="GO" id="GO:0001570">
    <property type="term" value="P:vasculogenesis"/>
    <property type="evidence" value="ECO:0007669"/>
    <property type="project" value="InterPro"/>
</dbReference>
<dbReference type="CDD" id="cd14987">
    <property type="entry name" value="7tmA_ACKR3_CXCR7"/>
    <property type="match status" value="1"/>
</dbReference>
<dbReference type="FunFam" id="1.20.1070.10:FF:000141">
    <property type="entry name" value="atypical chemokine receptor 3"/>
    <property type="match status" value="1"/>
</dbReference>
<dbReference type="Gene3D" id="1.20.1070.10">
    <property type="entry name" value="Rhodopsin 7-helix transmembrane proteins"/>
    <property type="match status" value="1"/>
</dbReference>
<dbReference type="InterPro" id="IPR001416">
    <property type="entry name" value="ACKR3"/>
</dbReference>
<dbReference type="InterPro" id="IPR000276">
    <property type="entry name" value="GPCR_Rhodpsn"/>
</dbReference>
<dbReference type="InterPro" id="IPR017452">
    <property type="entry name" value="GPCR_Rhodpsn_7TM"/>
</dbReference>
<dbReference type="InterPro" id="IPR047143">
    <property type="entry name" value="GPER1-like"/>
</dbReference>
<dbReference type="PANTHER" id="PTHR24226:SF5">
    <property type="entry name" value="CHEMOKINE (C-X-C MOTIF) RECEPTOR 7"/>
    <property type="match status" value="1"/>
</dbReference>
<dbReference type="PANTHER" id="PTHR24226">
    <property type="entry name" value="G-PROTEIN COUPLED RECEPTOR 182 AND ESTROGEN RECEPTOR 1"/>
    <property type="match status" value="1"/>
</dbReference>
<dbReference type="Pfam" id="PF00001">
    <property type="entry name" value="7tm_1"/>
    <property type="match status" value="1"/>
</dbReference>
<dbReference type="PRINTS" id="PR00237">
    <property type="entry name" value="GPCRRHODOPSN"/>
</dbReference>
<dbReference type="PRINTS" id="PR00646">
    <property type="entry name" value="RDC1ORPHANR"/>
</dbReference>
<dbReference type="SUPFAM" id="SSF81321">
    <property type="entry name" value="Family A G protein-coupled receptor-like"/>
    <property type="match status" value="1"/>
</dbReference>
<dbReference type="PROSITE" id="PS00237">
    <property type="entry name" value="G_PROTEIN_RECEP_F1_1"/>
    <property type="match status" value="1"/>
</dbReference>
<dbReference type="PROSITE" id="PS50262">
    <property type="entry name" value="G_PROTEIN_RECEP_F1_2"/>
    <property type="match status" value="1"/>
</dbReference>